<accession>Q9ZL51</accession>
<name>DEF_HELPJ</name>
<organism>
    <name type="scientific">Helicobacter pylori (strain J99 / ATCC 700824)</name>
    <name type="common">Campylobacter pylori J99</name>
    <dbReference type="NCBI Taxonomy" id="85963"/>
    <lineage>
        <taxon>Bacteria</taxon>
        <taxon>Pseudomonadati</taxon>
        <taxon>Campylobacterota</taxon>
        <taxon>Epsilonproteobacteria</taxon>
        <taxon>Campylobacterales</taxon>
        <taxon>Helicobacteraceae</taxon>
        <taxon>Helicobacter</taxon>
    </lineage>
</organism>
<proteinExistence type="inferred from homology"/>
<gene>
    <name evidence="1" type="primary">def</name>
    <name type="ordered locus">jhp_0729</name>
</gene>
<reference key="1">
    <citation type="journal article" date="1999" name="Nature">
        <title>Genomic sequence comparison of two unrelated isolates of the human gastric pathogen Helicobacter pylori.</title>
        <authorList>
            <person name="Alm R.A."/>
            <person name="Ling L.-S.L."/>
            <person name="Moir D.T."/>
            <person name="King B.L."/>
            <person name="Brown E.D."/>
            <person name="Doig P.C."/>
            <person name="Smith D.R."/>
            <person name="Noonan B."/>
            <person name="Guild B.C."/>
            <person name="deJonge B.L."/>
            <person name="Carmel G."/>
            <person name="Tummino P.J."/>
            <person name="Caruso A."/>
            <person name="Uria-Nickelsen M."/>
            <person name="Mills D.M."/>
            <person name="Ives C."/>
            <person name="Gibson R."/>
            <person name="Merberg D."/>
            <person name="Mills S.D."/>
            <person name="Jiang Q."/>
            <person name="Taylor D.E."/>
            <person name="Vovis G.F."/>
            <person name="Trust T.J."/>
        </authorList>
    </citation>
    <scope>NUCLEOTIDE SEQUENCE [LARGE SCALE GENOMIC DNA]</scope>
    <source>
        <strain>J99 / ATCC 700824</strain>
    </source>
</reference>
<protein>
    <recommendedName>
        <fullName evidence="1">Peptide deformylase</fullName>
        <shortName evidence="1">PDF</shortName>
        <ecNumber evidence="1">3.5.1.88</ecNumber>
    </recommendedName>
    <alternativeName>
        <fullName evidence="1">Polypeptide deformylase</fullName>
    </alternativeName>
</protein>
<keyword id="KW-0378">Hydrolase</keyword>
<keyword id="KW-0408">Iron</keyword>
<keyword id="KW-0479">Metal-binding</keyword>
<keyword id="KW-0648">Protein biosynthesis</keyword>
<dbReference type="EC" id="3.5.1.88" evidence="1"/>
<dbReference type="EMBL" id="AE001439">
    <property type="protein sequence ID" value="AAD06310.1"/>
    <property type="molecule type" value="Genomic_DNA"/>
</dbReference>
<dbReference type="PIR" id="G71895">
    <property type="entry name" value="G71895"/>
</dbReference>
<dbReference type="RefSeq" id="WP_001185863.1">
    <property type="nucleotide sequence ID" value="NZ_CP011330.1"/>
</dbReference>
<dbReference type="SMR" id="Q9ZL51"/>
<dbReference type="KEGG" id="hpj:jhp_0729"/>
<dbReference type="PATRIC" id="fig|85963.30.peg.247"/>
<dbReference type="eggNOG" id="COG0242">
    <property type="taxonomic scope" value="Bacteria"/>
</dbReference>
<dbReference type="Proteomes" id="UP000000804">
    <property type="component" value="Chromosome"/>
</dbReference>
<dbReference type="GO" id="GO:0046872">
    <property type="term" value="F:metal ion binding"/>
    <property type="evidence" value="ECO:0007669"/>
    <property type="project" value="UniProtKB-KW"/>
</dbReference>
<dbReference type="GO" id="GO:0042586">
    <property type="term" value="F:peptide deformylase activity"/>
    <property type="evidence" value="ECO:0007669"/>
    <property type="project" value="UniProtKB-UniRule"/>
</dbReference>
<dbReference type="GO" id="GO:0043686">
    <property type="term" value="P:co-translational protein modification"/>
    <property type="evidence" value="ECO:0007669"/>
    <property type="project" value="TreeGrafter"/>
</dbReference>
<dbReference type="GO" id="GO:0006412">
    <property type="term" value="P:translation"/>
    <property type="evidence" value="ECO:0007669"/>
    <property type="project" value="UniProtKB-UniRule"/>
</dbReference>
<dbReference type="CDD" id="cd00487">
    <property type="entry name" value="Pep_deformylase"/>
    <property type="match status" value="1"/>
</dbReference>
<dbReference type="FunFam" id="3.90.45.10:FF:000008">
    <property type="entry name" value="Peptide deformylase"/>
    <property type="match status" value="1"/>
</dbReference>
<dbReference type="Gene3D" id="3.90.45.10">
    <property type="entry name" value="Peptide deformylase"/>
    <property type="match status" value="1"/>
</dbReference>
<dbReference type="HAMAP" id="MF_00163">
    <property type="entry name" value="Pep_deformylase"/>
    <property type="match status" value="1"/>
</dbReference>
<dbReference type="InterPro" id="IPR023635">
    <property type="entry name" value="Peptide_deformylase"/>
</dbReference>
<dbReference type="InterPro" id="IPR036821">
    <property type="entry name" value="Peptide_deformylase_sf"/>
</dbReference>
<dbReference type="NCBIfam" id="TIGR00079">
    <property type="entry name" value="pept_deformyl"/>
    <property type="match status" value="1"/>
</dbReference>
<dbReference type="NCBIfam" id="NF001159">
    <property type="entry name" value="PRK00150.1-3"/>
    <property type="match status" value="1"/>
</dbReference>
<dbReference type="PANTHER" id="PTHR10458">
    <property type="entry name" value="PEPTIDE DEFORMYLASE"/>
    <property type="match status" value="1"/>
</dbReference>
<dbReference type="PANTHER" id="PTHR10458:SF22">
    <property type="entry name" value="PEPTIDE DEFORMYLASE"/>
    <property type="match status" value="1"/>
</dbReference>
<dbReference type="Pfam" id="PF01327">
    <property type="entry name" value="Pep_deformylase"/>
    <property type="match status" value="1"/>
</dbReference>
<dbReference type="PIRSF" id="PIRSF004749">
    <property type="entry name" value="Pep_def"/>
    <property type="match status" value="1"/>
</dbReference>
<dbReference type="PRINTS" id="PR01576">
    <property type="entry name" value="PDEFORMYLASE"/>
</dbReference>
<dbReference type="SUPFAM" id="SSF56420">
    <property type="entry name" value="Peptide deformylase"/>
    <property type="match status" value="1"/>
</dbReference>
<comment type="function">
    <text evidence="1">Removes the formyl group from the N-terminal Met of newly synthesized proteins. Requires at least a dipeptide for an efficient rate of reaction. N-terminal L-methionine is a prerequisite for activity but the enzyme has broad specificity at other positions.</text>
</comment>
<comment type="catalytic activity">
    <reaction evidence="1">
        <text>N-terminal N-formyl-L-methionyl-[peptide] + H2O = N-terminal L-methionyl-[peptide] + formate</text>
        <dbReference type="Rhea" id="RHEA:24420"/>
        <dbReference type="Rhea" id="RHEA-COMP:10639"/>
        <dbReference type="Rhea" id="RHEA-COMP:10640"/>
        <dbReference type="ChEBI" id="CHEBI:15377"/>
        <dbReference type="ChEBI" id="CHEBI:15740"/>
        <dbReference type="ChEBI" id="CHEBI:49298"/>
        <dbReference type="ChEBI" id="CHEBI:64731"/>
        <dbReference type="EC" id="3.5.1.88"/>
    </reaction>
</comment>
<comment type="cofactor">
    <cofactor evidence="1">
        <name>Fe(2+)</name>
        <dbReference type="ChEBI" id="CHEBI:29033"/>
    </cofactor>
    <text evidence="1">Binds 1 Fe(2+) ion.</text>
</comment>
<comment type="similarity">
    <text evidence="1">Belongs to the polypeptide deformylase family.</text>
</comment>
<sequence>MALLEIIHYPSKILRTISKEVVSFDSKLHQQLDDMHETMIASEGIGLAAIQVGLPLRMLIINLPQEDGVQHKEDCLEIINPKWIETKGSIMYREGCLSVPGFYEEVERFEKVKIEYQNRFAEVKILEASELLAVAIQHEIDHLNGVLFVDKLSILKRKKFEKELKELQKKQKHK</sequence>
<feature type="chain" id="PRO_0000082791" description="Peptide deformylase">
    <location>
        <begin position="1"/>
        <end position="174"/>
    </location>
</feature>
<feature type="active site" evidence="1">
    <location>
        <position position="139"/>
    </location>
</feature>
<feature type="binding site" evidence="1">
    <location>
        <position position="96"/>
    </location>
    <ligand>
        <name>Fe cation</name>
        <dbReference type="ChEBI" id="CHEBI:24875"/>
    </ligand>
</feature>
<feature type="binding site" evidence="1">
    <location>
        <position position="138"/>
    </location>
    <ligand>
        <name>Fe cation</name>
        <dbReference type="ChEBI" id="CHEBI:24875"/>
    </ligand>
</feature>
<feature type="binding site" evidence="1">
    <location>
        <position position="142"/>
    </location>
    <ligand>
        <name>Fe cation</name>
        <dbReference type="ChEBI" id="CHEBI:24875"/>
    </ligand>
</feature>
<evidence type="ECO:0000255" key="1">
    <source>
        <dbReference type="HAMAP-Rule" id="MF_00163"/>
    </source>
</evidence>